<keyword id="KW-0325">Glycoprotein</keyword>
<keyword id="KW-0472">Membrane</keyword>
<keyword id="KW-0812">Transmembrane</keyword>
<keyword id="KW-1133">Transmembrane helix</keyword>
<keyword id="KW-0813">Transport</keyword>
<keyword id="KW-0843">Virulence</keyword>
<proteinExistence type="inferred from homology"/>
<sequence>MLQEDKSSETMHDPSTRGVETRNVTAVDSPLETATTSESPETERTNVAPAKRDWRFWALLVSISLAGLLTALEGTITSTALPSIVNDLGGGHLYVWVVNGYLFAMTAMQPMYGQLANIFGRRWPMLGATALFVLGSGICGGATNIETLIAGRILQGIGASGTTVLTETIICDVVPLRERSKFLAIVMGMIFLGTALGPFFAGLIVQYSTWRWTFYLALPVGGAALVALFSFLKVKYQKETNLATKISTIDWAGNALFVAAISSVLIGLSWAGSVYAWSSFRVLVPLFVGIAGMGLFMVFEGSRFAPNPTVPLHLFGNRTSVGVMIMTFFHGIITIWQLYFMPVYFQGVLGSSPSRSGVQILATILAILPAAGIGGFLMTKMGRYKPIHYASWAVTLIGLGLFSLLDSGSSTGAWVGFQIVYSMGAGMLVPTLLPALLAPLSESDTALGAATWSFVRSFGMVWGTAIPAAVFNTRSDQLAPELINSPALRADIMGGKAYEHATSAFLGTLSDAASEQMKNVFSRSLRQTWLVSLAFAGMGLLAATLAREVPMRSELDTEYGMEERKPKKASEA</sequence>
<feature type="chain" id="PRO_0000458427" description="MFS-type transporter pydD">
    <location>
        <begin position="1"/>
        <end position="572"/>
    </location>
</feature>
<feature type="transmembrane region" description="Helical" evidence="1">
    <location>
        <begin position="56"/>
        <end position="76"/>
    </location>
</feature>
<feature type="transmembrane region" description="Helical" evidence="1">
    <location>
        <begin position="88"/>
        <end position="108"/>
    </location>
</feature>
<feature type="transmembrane region" description="Helical" evidence="1">
    <location>
        <begin position="123"/>
        <end position="143"/>
    </location>
</feature>
<feature type="transmembrane region" description="Helical" evidence="1">
    <location>
        <begin position="156"/>
        <end position="176"/>
    </location>
</feature>
<feature type="transmembrane region" description="Helical" evidence="1">
    <location>
        <begin position="185"/>
        <end position="205"/>
    </location>
</feature>
<feature type="transmembrane region" description="Helical" evidence="1">
    <location>
        <begin position="212"/>
        <end position="232"/>
    </location>
</feature>
<feature type="transmembrane region" description="Helical" evidence="1">
    <location>
        <begin position="255"/>
        <end position="275"/>
    </location>
</feature>
<feature type="transmembrane region" description="Helical" evidence="1">
    <location>
        <begin position="282"/>
        <end position="302"/>
    </location>
</feature>
<feature type="transmembrane region" description="Helical" evidence="1">
    <location>
        <begin position="321"/>
        <end position="341"/>
    </location>
</feature>
<feature type="transmembrane region" description="Helical" evidence="1">
    <location>
        <begin position="358"/>
        <end position="378"/>
    </location>
</feature>
<feature type="transmembrane region" description="Helical" evidence="1">
    <location>
        <begin position="386"/>
        <end position="406"/>
    </location>
</feature>
<feature type="transmembrane region" description="Helical" evidence="1">
    <location>
        <begin position="419"/>
        <end position="439"/>
    </location>
</feature>
<feature type="transmembrane region" description="Helical" evidence="1">
    <location>
        <begin position="451"/>
        <end position="471"/>
    </location>
</feature>
<feature type="transmembrane region" description="Helical" evidence="1">
    <location>
        <begin position="529"/>
        <end position="549"/>
    </location>
</feature>
<feature type="region of interest" description="Disordered" evidence="3">
    <location>
        <begin position="1"/>
        <end position="46"/>
    </location>
</feature>
<feature type="compositionally biased region" description="Basic and acidic residues" evidence="3">
    <location>
        <begin position="1"/>
        <end position="15"/>
    </location>
</feature>
<feature type="compositionally biased region" description="Low complexity" evidence="3">
    <location>
        <begin position="29"/>
        <end position="39"/>
    </location>
</feature>
<feature type="glycosylation site" description="N-linked (GlcNAc...) asparagine" evidence="2">
    <location>
        <position position="23"/>
    </location>
</feature>
<feature type="glycosylation site" description="N-linked (GlcNAc...) asparagine" evidence="2">
    <location>
        <position position="317"/>
    </location>
</feature>
<accession>A0A8F4NV97</accession>
<evidence type="ECO:0000255" key="1"/>
<evidence type="ECO:0000255" key="2">
    <source>
        <dbReference type="PROSITE-ProRule" id="PRU00498"/>
    </source>
</evidence>
<evidence type="ECO:0000256" key="3">
    <source>
        <dbReference type="SAM" id="MobiDB-lite"/>
    </source>
</evidence>
<evidence type="ECO:0000269" key="4">
    <source>
    </source>
</evidence>
<evidence type="ECO:0000303" key="5">
    <source>
    </source>
</evidence>
<evidence type="ECO:0000305" key="6"/>
<gene>
    <name evidence="5" type="primary">pydD</name>
</gene>
<comment type="function">
    <text evidence="4">MFS-type transporter; part of the gene cluster that mediates the biosynthesis of pyrrocidines, fungal natural products containing a macrocyclic para-cyclophane connected to a decahydrofluorene ring system that show potent antibiotic activities toward Gram-negative bacteria.</text>
</comment>
<comment type="subcellular location">
    <subcellularLocation>
        <location evidence="1">Membrane</location>
        <topology evidence="1">Multi-pass membrane protein</topology>
    </subcellularLocation>
</comment>
<comment type="similarity">
    <text evidence="6">Belongs to the major facilitator superfamily.</text>
</comment>
<reference key="1">
    <citation type="journal article" date="2021" name="J. Am. Chem. Soc.">
        <title>Biosynthesis of para-cyclophane-containing hirsutellone family of fungal natural products.</title>
        <authorList>
            <person name="Ohashi M."/>
            <person name="Kakule T.B."/>
            <person name="Tang M.C."/>
            <person name="Jamieson C.S."/>
            <person name="Liu M."/>
            <person name="Zhao Y.L."/>
            <person name="Houk K.N."/>
            <person name="Tang Y."/>
        </authorList>
    </citation>
    <scope>NUCLEOTIDE SEQUENCE [GENOMIC DNA]</scope>
    <scope>FUNCTION</scope>
</reference>
<dbReference type="EMBL" id="MW690134">
    <property type="protein sequence ID" value="QXF14603.1"/>
    <property type="molecule type" value="Genomic_DNA"/>
</dbReference>
<dbReference type="SMR" id="A0A8F4NV97"/>
<dbReference type="GO" id="GO:0005886">
    <property type="term" value="C:plasma membrane"/>
    <property type="evidence" value="ECO:0007669"/>
    <property type="project" value="TreeGrafter"/>
</dbReference>
<dbReference type="GO" id="GO:0022857">
    <property type="term" value="F:transmembrane transporter activity"/>
    <property type="evidence" value="ECO:0007669"/>
    <property type="project" value="InterPro"/>
</dbReference>
<dbReference type="Gene3D" id="1.20.1250.20">
    <property type="entry name" value="MFS general substrate transporter like domains"/>
    <property type="match status" value="1"/>
</dbReference>
<dbReference type="Gene3D" id="1.20.1720.10">
    <property type="entry name" value="Multidrug resistance protein D"/>
    <property type="match status" value="1"/>
</dbReference>
<dbReference type="InterPro" id="IPR011701">
    <property type="entry name" value="MFS"/>
</dbReference>
<dbReference type="InterPro" id="IPR020846">
    <property type="entry name" value="MFS_dom"/>
</dbReference>
<dbReference type="InterPro" id="IPR036259">
    <property type="entry name" value="MFS_trans_sf"/>
</dbReference>
<dbReference type="PANTHER" id="PTHR23501">
    <property type="entry name" value="MAJOR FACILITATOR SUPERFAMILY"/>
    <property type="match status" value="1"/>
</dbReference>
<dbReference type="PANTHER" id="PTHR23501:SF187">
    <property type="entry name" value="MAJOR FACILITATOR SUPERFAMILY (MFS) PROFILE DOMAIN-CONTAINING PROTEIN"/>
    <property type="match status" value="1"/>
</dbReference>
<dbReference type="Pfam" id="PF07690">
    <property type="entry name" value="MFS_1"/>
    <property type="match status" value="1"/>
</dbReference>
<dbReference type="SUPFAM" id="SSF103473">
    <property type="entry name" value="MFS general substrate transporter"/>
    <property type="match status" value="1"/>
</dbReference>
<dbReference type="PROSITE" id="PS50850">
    <property type="entry name" value="MFS"/>
    <property type="match status" value="1"/>
</dbReference>
<protein>
    <recommendedName>
        <fullName evidence="5">MFS-type transporter pydD</fullName>
    </recommendedName>
    <alternativeName>
        <fullName evidence="5">Pyrrocidines biosynthesis cluster protein D</fullName>
    </alternativeName>
</protein>
<organism>
    <name type="scientific">Acremonium sp</name>
    <dbReference type="NCBI Taxonomy" id="2046025"/>
    <lineage>
        <taxon>Eukaryota</taxon>
        <taxon>Fungi</taxon>
        <taxon>Dikarya</taxon>
        <taxon>Ascomycota</taxon>
        <taxon>Pezizomycotina</taxon>
        <taxon>Sordariomycetes</taxon>
        <taxon>Hypocreomycetidae</taxon>
        <taxon>Hypocreales</taxon>
        <taxon>Hypocreales incertae sedis</taxon>
        <taxon>Acremonium</taxon>
    </lineage>
</organism>
<name>PYDD_ACRSP</name>